<comment type="function">
    <text evidence="1">Promotes integrin-mediated cell adhesion. May stimulate host defense against viruses and tumor cells (By similarity).</text>
</comment>
<comment type="subunit">
    <text evidence="1 6">Homodimers and homomultimers. The multimers form ring-like structures with a diameter of 30-40 nm. Binds LGALS1 and LGALS3. Binds ITGB1, COL4A1, COL5A1, COL6A1, FN1 and NID (By similarity). Interacts with PPIC (in vitro). The unglycosylated form interacts with PDE4DIP isoform 2/MMG8/SMYLE; this interaction may connect a pericentrosomal complex to the gamma-tubulin ring complex (gamma-TuRC) to promote microtubule assembly and acetylation (By similarity).</text>
</comment>
<comment type="subcellular location">
    <subcellularLocation>
        <location evidence="1">Secreted</location>
    </subcellularLocation>
    <subcellularLocation>
        <location evidence="5">Secreted</location>
        <location evidence="5">Extracellular space</location>
        <location evidence="5">Extracellular matrix</location>
    </subcellularLocation>
</comment>
<comment type="tissue specificity">
    <text evidence="5 6">Detected in embryo, liver, spleen, kidney, lung, heart, intestine, thymus and lymph node.</text>
</comment>
<comment type="induction">
    <text evidence="5">Up-regulated by TNF and IFNG.</text>
</comment>
<comment type="PTM">
    <text evidence="6">N-glycosylated.</text>
</comment>
<evidence type="ECO:0000250" key="1">
    <source>
        <dbReference type="UniProtKB" id="Q08380"/>
    </source>
</evidence>
<evidence type="ECO:0000255" key="2"/>
<evidence type="ECO:0000255" key="3">
    <source>
        <dbReference type="PROSITE-ProRule" id="PRU00037"/>
    </source>
</evidence>
<evidence type="ECO:0000255" key="4">
    <source>
        <dbReference type="PROSITE-ProRule" id="PRU00196"/>
    </source>
</evidence>
<evidence type="ECO:0000269" key="5">
    <source>
    </source>
</evidence>
<evidence type="ECO:0000269" key="6">
    <source>
    </source>
</evidence>
<evidence type="ECO:0000305" key="7"/>
<sequence>MALLWLLSVFLLVPGTQGTEDGDMRLVNGASANEGRVEIFYRGRWGTVCDNLWNLLDAHVVCRALGYENATQALGRAAFGPGKGPIMLDEVECTGTESSLASCRSLGWMVSRCGHEKDAGVVCSNDTTGLHILDLSGELSDALGQIFDSQQGCDLFIQVTGQGYEDLSLCAHTLILRTNPEAQALWQVVGSSVIMRVDAECMPVVRDFLRYFYSRRIEVSMSSVKCLHKLASAYGATELQDYCGRLFATLLPQDPTFHTPLDLYAYARATGDSMLEDLCVQFLAWNFEPLTQSESWSAVPTTLIQALLPKSELAVSSELDLLKAVDQWSTETIASHEDIERLVEQVRFPMMLPQELFELQFNLSLYQDHQALFQRKTMQALEFHTVPVEVLAKYKGLNLTEDTYKPRLYTSSTWSSLVMASTWRAQRYEYNRYNQLYTYGYGSVARYNSYQSFQTPQHPSFLFKDKQISWSATYLPTMQSCWNYGFSCTSNELPVLGLTTSSYSNPTIGYENRVLILCGGYSVVDVTSFEGSKAPIPTALDTNSSKTPSLFPCASGAFSSFRVVIRPFYLTNSTDMV</sequence>
<feature type="signal peptide" evidence="2">
    <location>
        <begin position="1"/>
        <end position="18"/>
    </location>
</feature>
<feature type="chain" id="PRO_0000357035" description="Galectin-3-binding protein">
    <location>
        <begin position="19"/>
        <end position="577"/>
    </location>
</feature>
<feature type="domain" description="SRCR" evidence="4">
    <location>
        <begin position="24"/>
        <end position="124"/>
    </location>
</feature>
<feature type="domain" description="BTB" evidence="3">
    <location>
        <begin position="153"/>
        <end position="221"/>
    </location>
</feature>
<feature type="domain" description="BACK">
    <location>
        <begin position="260"/>
        <end position="360"/>
    </location>
</feature>
<feature type="glycosylation site" description="N-linked (GlcNAc...) asparagine" evidence="2">
    <location>
        <position position="69"/>
    </location>
</feature>
<feature type="glycosylation site" description="N-linked (GlcNAc...) asparagine" evidence="2">
    <location>
        <position position="125"/>
    </location>
</feature>
<feature type="glycosylation site" description="N-linked (GlcNAc...) asparagine" evidence="2">
    <location>
        <position position="362"/>
    </location>
</feature>
<feature type="glycosylation site" description="N-linked (GlcNAc...) asparagine" evidence="2">
    <location>
        <position position="398"/>
    </location>
</feature>
<feature type="glycosylation site" description="N-linked (GlcNAc...) asparagine" evidence="2">
    <location>
        <position position="543"/>
    </location>
</feature>
<feature type="glycosylation site" description="N-linked (GlcNAc...) asparagine" evidence="2">
    <location>
        <position position="572"/>
    </location>
</feature>
<feature type="disulfide bond" evidence="4">
    <location>
        <begin position="49"/>
        <end position="113"/>
    </location>
</feature>
<feature type="disulfide bond" evidence="4">
    <location>
        <begin position="62"/>
        <end position="123"/>
    </location>
</feature>
<feature type="disulfide bond" evidence="4">
    <location>
        <begin position="93"/>
        <end position="103"/>
    </location>
</feature>
<feature type="sequence conflict" description="In Ref. 1; AAA37499." evidence="7" ref="1">
    <original>R</original>
    <variation>G</variation>
    <location>
        <position position="25"/>
    </location>
</feature>
<feature type="sequence conflict" description="In Ref. 1; AAA37499." evidence="7" ref="1">
    <original>H</original>
    <variation>P</variation>
    <location>
        <position position="228"/>
    </location>
</feature>
<feature type="sequence conflict" description="In Ref. 3; BAE29246." evidence="7" ref="3">
    <original>R</original>
    <variation>C</variation>
    <location>
        <position position="347"/>
    </location>
</feature>
<feature type="sequence conflict" description="In Ref. 3; BAE31894." evidence="7" ref="3">
    <original>Q</original>
    <variation>K</variation>
    <location>
        <position position="370"/>
    </location>
</feature>
<feature type="sequence conflict" description="In Ref. 3; BAE31013." evidence="7" ref="3">
    <original>D</original>
    <variation>E</variation>
    <location>
        <position position="465"/>
    </location>
</feature>
<feature type="sequence conflict" description="In Ref. 1; AAA37499." evidence="7" ref="1">
    <original>KQ</original>
    <variation>NE</variation>
    <location>
        <begin position="466"/>
        <end position="467"/>
    </location>
</feature>
<feature type="sequence conflict" description="In Ref. 1; AAA37499." evidence="7" ref="1">
    <original>STDMV</original>
    <variation>LH</variation>
    <location>
        <begin position="573"/>
        <end position="577"/>
    </location>
</feature>
<proteinExistence type="evidence at protein level"/>
<keyword id="KW-0130">Cell adhesion</keyword>
<keyword id="KW-0903">Direct protein sequencing</keyword>
<keyword id="KW-1015">Disulfide bond</keyword>
<keyword id="KW-0272">Extracellular matrix</keyword>
<keyword id="KW-0325">Glycoprotein</keyword>
<keyword id="KW-1185">Reference proteome</keyword>
<keyword id="KW-0964">Secreted</keyword>
<keyword id="KW-0732">Signal</keyword>
<organism>
    <name type="scientific">Mus musculus</name>
    <name type="common">Mouse</name>
    <dbReference type="NCBI Taxonomy" id="10090"/>
    <lineage>
        <taxon>Eukaryota</taxon>
        <taxon>Metazoa</taxon>
        <taxon>Chordata</taxon>
        <taxon>Craniata</taxon>
        <taxon>Vertebrata</taxon>
        <taxon>Euteleostomi</taxon>
        <taxon>Mammalia</taxon>
        <taxon>Eutheria</taxon>
        <taxon>Euarchontoglires</taxon>
        <taxon>Glires</taxon>
        <taxon>Rodentia</taxon>
        <taxon>Myomorpha</taxon>
        <taxon>Muroidea</taxon>
        <taxon>Muridae</taxon>
        <taxon>Murinae</taxon>
        <taxon>Mus</taxon>
        <taxon>Mus</taxon>
    </lineage>
</organism>
<protein>
    <recommendedName>
        <fullName>Galectin-3-binding protein</fullName>
    </recommendedName>
    <alternativeName>
        <fullName>Cyp-C-associated protein</fullName>
        <shortName>CyCAP</shortName>
    </alternativeName>
    <alternativeName>
        <fullName>Lectin galactoside-binding soluble 3-binding protein</fullName>
    </alternativeName>
    <alternativeName>
        <fullName>Protein MAMA</fullName>
    </alternativeName>
</protein>
<name>LG3BP_MOUSE</name>
<reference key="1">
    <citation type="journal article" date="1993" name="Proc. Natl. Acad. Sci. U.S.A.">
        <title>Cloning and characterization of cyclophilin C-associated protein: a candidate natural cellular ligand for cyclophilin C.</title>
        <authorList>
            <person name="Friedman J.S."/>
            <person name="Trahey M."/>
            <person name="Weissman I.L."/>
        </authorList>
    </citation>
    <scope>NUCLEOTIDE SEQUENCE [MRNA]</scope>
    <scope>PARTIAL PROTEIN SEQUENCE</scope>
    <scope>INTERACTION WITH PPIC</scope>
    <scope>GLYCOSYLATION</scope>
    <scope>TISSUE SPECIFICITY</scope>
    <source>
        <strain>BALB/cJ</strain>
        <tissue>Bone marrow</tissue>
    </source>
</reference>
<reference key="2">
    <citation type="journal article" date="1994" name="J. Biol. Chem.">
        <title>Cloning and expression of a mouse macrophage cDNA coding for a membrane glycoprotein of the scavenger receptor cysteine-rich domain family.</title>
        <authorList>
            <person name="Chicheportiche Y."/>
            <person name="Vassalli P."/>
        </authorList>
    </citation>
    <scope>NUCLEOTIDE SEQUENCE [MRNA]</scope>
    <scope>INDUCTION</scope>
    <scope>SUBCELLULAR LOCATION</scope>
    <scope>TISSUE SPECIFICITY</scope>
    <source>
        <strain>BALB/cJ</strain>
        <tissue>Bone marrow macrophage</tissue>
    </source>
</reference>
<reference key="3">
    <citation type="journal article" date="2005" name="Science">
        <title>The transcriptional landscape of the mammalian genome.</title>
        <authorList>
            <person name="Carninci P."/>
            <person name="Kasukawa T."/>
            <person name="Katayama S."/>
            <person name="Gough J."/>
            <person name="Frith M.C."/>
            <person name="Maeda N."/>
            <person name="Oyama R."/>
            <person name="Ravasi T."/>
            <person name="Lenhard B."/>
            <person name="Wells C."/>
            <person name="Kodzius R."/>
            <person name="Shimokawa K."/>
            <person name="Bajic V.B."/>
            <person name="Brenner S.E."/>
            <person name="Batalov S."/>
            <person name="Forrest A.R."/>
            <person name="Zavolan M."/>
            <person name="Davis M.J."/>
            <person name="Wilming L.G."/>
            <person name="Aidinis V."/>
            <person name="Allen J.E."/>
            <person name="Ambesi-Impiombato A."/>
            <person name="Apweiler R."/>
            <person name="Aturaliya R.N."/>
            <person name="Bailey T.L."/>
            <person name="Bansal M."/>
            <person name="Baxter L."/>
            <person name="Beisel K.W."/>
            <person name="Bersano T."/>
            <person name="Bono H."/>
            <person name="Chalk A.M."/>
            <person name="Chiu K.P."/>
            <person name="Choudhary V."/>
            <person name="Christoffels A."/>
            <person name="Clutterbuck D.R."/>
            <person name="Crowe M.L."/>
            <person name="Dalla E."/>
            <person name="Dalrymple B.P."/>
            <person name="de Bono B."/>
            <person name="Della Gatta G."/>
            <person name="di Bernardo D."/>
            <person name="Down T."/>
            <person name="Engstrom P."/>
            <person name="Fagiolini M."/>
            <person name="Faulkner G."/>
            <person name="Fletcher C.F."/>
            <person name="Fukushima T."/>
            <person name="Furuno M."/>
            <person name="Futaki S."/>
            <person name="Gariboldi M."/>
            <person name="Georgii-Hemming P."/>
            <person name="Gingeras T.R."/>
            <person name="Gojobori T."/>
            <person name="Green R.E."/>
            <person name="Gustincich S."/>
            <person name="Harbers M."/>
            <person name="Hayashi Y."/>
            <person name="Hensch T.K."/>
            <person name="Hirokawa N."/>
            <person name="Hill D."/>
            <person name="Huminiecki L."/>
            <person name="Iacono M."/>
            <person name="Ikeo K."/>
            <person name="Iwama A."/>
            <person name="Ishikawa T."/>
            <person name="Jakt M."/>
            <person name="Kanapin A."/>
            <person name="Katoh M."/>
            <person name="Kawasawa Y."/>
            <person name="Kelso J."/>
            <person name="Kitamura H."/>
            <person name="Kitano H."/>
            <person name="Kollias G."/>
            <person name="Krishnan S.P."/>
            <person name="Kruger A."/>
            <person name="Kummerfeld S.K."/>
            <person name="Kurochkin I.V."/>
            <person name="Lareau L.F."/>
            <person name="Lazarevic D."/>
            <person name="Lipovich L."/>
            <person name="Liu J."/>
            <person name="Liuni S."/>
            <person name="McWilliam S."/>
            <person name="Madan Babu M."/>
            <person name="Madera M."/>
            <person name="Marchionni L."/>
            <person name="Matsuda H."/>
            <person name="Matsuzawa S."/>
            <person name="Miki H."/>
            <person name="Mignone F."/>
            <person name="Miyake S."/>
            <person name="Morris K."/>
            <person name="Mottagui-Tabar S."/>
            <person name="Mulder N."/>
            <person name="Nakano N."/>
            <person name="Nakauchi H."/>
            <person name="Ng P."/>
            <person name="Nilsson R."/>
            <person name="Nishiguchi S."/>
            <person name="Nishikawa S."/>
            <person name="Nori F."/>
            <person name="Ohara O."/>
            <person name="Okazaki Y."/>
            <person name="Orlando V."/>
            <person name="Pang K.C."/>
            <person name="Pavan W.J."/>
            <person name="Pavesi G."/>
            <person name="Pesole G."/>
            <person name="Petrovsky N."/>
            <person name="Piazza S."/>
            <person name="Reed J."/>
            <person name="Reid J.F."/>
            <person name="Ring B.Z."/>
            <person name="Ringwald M."/>
            <person name="Rost B."/>
            <person name="Ruan Y."/>
            <person name="Salzberg S.L."/>
            <person name="Sandelin A."/>
            <person name="Schneider C."/>
            <person name="Schoenbach C."/>
            <person name="Sekiguchi K."/>
            <person name="Semple C.A."/>
            <person name="Seno S."/>
            <person name="Sessa L."/>
            <person name="Sheng Y."/>
            <person name="Shibata Y."/>
            <person name="Shimada H."/>
            <person name="Shimada K."/>
            <person name="Silva D."/>
            <person name="Sinclair B."/>
            <person name="Sperling S."/>
            <person name="Stupka E."/>
            <person name="Sugiura K."/>
            <person name="Sultana R."/>
            <person name="Takenaka Y."/>
            <person name="Taki K."/>
            <person name="Tammoja K."/>
            <person name="Tan S.L."/>
            <person name="Tang S."/>
            <person name="Taylor M.S."/>
            <person name="Tegner J."/>
            <person name="Teichmann S.A."/>
            <person name="Ueda H.R."/>
            <person name="van Nimwegen E."/>
            <person name="Verardo R."/>
            <person name="Wei C.L."/>
            <person name="Yagi K."/>
            <person name="Yamanishi H."/>
            <person name="Zabarovsky E."/>
            <person name="Zhu S."/>
            <person name="Zimmer A."/>
            <person name="Hide W."/>
            <person name="Bult C."/>
            <person name="Grimmond S.M."/>
            <person name="Teasdale R.D."/>
            <person name="Liu E.T."/>
            <person name="Brusic V."/>
            <person name="Quackenbush J."/>
            <person name="Wahlestedt C."/>
            <person name="Mattick J.S."/>
            <person name="Hume D.A."/>
            <person name="Kai C."/>
            <person name="Sasaki D."/>
            <person name="Tomaru Y."/>
            <person name="Fukuda S."/>
            <person name="Kanamori-Katayama M."/>
            <person name="Suzuki M."/>
            <person name="Aoki J."/>
            <person name="Arakawa T."/>
            <person name="Iida J."/>
            <person name="Imamura K."/>
            <person name="Itoh M."/>
            <person name="Kato T."/>
            <person name="Kawaji H."/>
            <person name="Kawagashira N."/>
            <person name="Kawashima T."/>
            <person name="Kojima M."/>
            <person name="Kondo S."/>
            <person name="Konno H."/>
            <person name="Nakano K."/>
            <person name="Ninomiya N."/>
            <person name="Nishio T."/>
            <person name="Okada M."/>
            <person name="Plessy C."/>
            <person name="Shibata K."/>
            <person name="Shiraki T."/>
            <person name="Suzuki S."/>
            <person name="Tagami M."/>
            <person name="Waki K."/>
            <person name="Watahiki A."/>
            <person name="Okamura-Oho Y."/>
            <person name="Suzuki H."/>
            <person name="Kawai J."/>
            <person name="Hayashizaki Y."/>
        </authorList>
    </citation>
    <scope>NUCLEOTIDE SEQUENCE [LARGE SCALE MRNA]</scope>
    <source>
        <strain>BALB/cJ</strain>
        <strain>C57BL/6J</strain>
        <strain>NOD</strain>
        <tissue>Aorta</tissue>
        <tissue>Bone marrow</tissue>
        <tissue>Thymus</tissue>
        <tissue>Vein</tissue>
    </source>
</reference>
<reference key="4">
    <citation type="journal article" date="2009" name="PLoS Biol.">
        <title>Lineage-specific biology revealed by a finished genome assembly of the mouse.</title>
        <authorList>
            <person name="Church D.M."/>
            <person name="Goodstadt L."/>
            <person name="Hillier L.W."/>
            <person name="Zody M.C."/>
            <person name="Goldstein S."/>
            <person name="She X."/>
            <person name="Bult C.J."/>
            <person name="Agarwala R."/>
            <person name="Cherry J.L."/>
            <person name="DiCuccio M."/>
            <person name="Hlavina W."/>
            <person name="Kapustin Y."/>
            <person name="Meric P."/>
            <person name="Maglott D."/>
            <person name="Birtle Z."/>
            <person name="Marques A.C."/>
            <person name="Graves T."/>
            <person name="Zhou S."/>
            <person name="Teague B."/>
            <person name="Potamousis K."/>
            <person name="Churas C."/>
            <person name="Place M."/>
            <person name="Herschleb J."/>
            <person name="Runnheim R."/>
            <person name="Forrest D."/>
            <person name="Amos-Landgraf J."/>
            <person name="Schwartz D.C."/>
            <person name="Cheng Z."/>
            <person name="Lindblad-Toh K."/>
            <person name="Eichler E.E."/>
            <person name="Ponting C.P."/>
        </authorList>
    </citation>
    <scope>NUCLEOTIDE SEQUENCE [LARGE SCALE GENOMIC DNA]</scope>
    <source>
        <strain>C57BL/6J</strain>
    </source>
</reference>
<reference key="5">
    <citation type="submission" date="2005-07" db="EMBL/GenBank/DDBJ databases">
        <authorList>
            <person name="Mural R.J."/>
            <person name="Adams M.D."/>
            <person name="Myers E.W."/>
            <person name="Smith H.O."/>
            <person name="Venter J.C."/>
        </authorList>
    </citation>
    <scope>NUCLEOTIDE SEQUENCE [LARGE SCALE GENOMIC DNA]</scope>
</reference>
<reference key="6">
    <citation type="journal article" date="2004" name="Genome Res.">
        <title>The status, quality, and expansion of the NIH full-length cDNA project: the Mammalian Gene Collection (MGC).</title>
        <authorList>
            <consortium name="The MGC Project Team"/>
        </authorList>
    </citation>
    <scope>NUCLEOTIDE SEQUENCE [LARGE SCALE MRNA]</scope>
    <source>
        <strain>C57BL/6J</strain>
        <tissue>Eye</tissue>
    </source>
</reference>
<reference key="7">
    <citation type="journal article" date="2010" name="Cell">
        <title>A tissue-specific atlas of mouse protein phosphorylation and expression.</title>
        <authorList>
            <person name="Huttlin E.L."/>
            <person name="Jedrychowski M.P."/>
            <person name="Elias J.E."/>
            <person name="Goswami T."/>
            <person name="Rad R."/>
            <person name="Beausoleil S.A."/>
            <person name="Villen J."/>
            <person name="Haas W."/>
            <person name="Sowa M.E."/>
            <person name="Gygi S.P."/>
        </authorList>
    </citation>
    <scope>IDENTIFICATION BY MASS SPECTROMETRY [LARGE SCALE ANALYSIS]</scope>
    <source>
        <tissue>Kidney</tissue>
        <tissue>Liver</tissue>
        <tissue>Lung</tissue>
        <tissue>Spleen</tissue>
        <tissue>Testis</tissue>
    </source>
</reference>
<gene>
    <name type="primary">Lgals3bp</name>
    <name type="synonym">Cycap</name>
    <name type="synonym">Mama</name>
</gene>
<dbReference type="EMBL" id="L16894">
    <property type="protein sequence ID" value="AAA37499.1"/>
    <property type="molecule type" value="mRNA"/>
</dbReference>
<dbReference type="EMBL" id="X67809">
    <property type="protein sequence ID" value="CAA48010.1"/>
    <property type="molecule type" value="mRNA"/>
</dbReference>
<dbReference type="EMBL" id="AK079915">
    <property type="protein sequence ID" value="BAC37782.1"/>
    <property type="molecule type" value="mRNA"/>
</dbReference>
<dbReference type="EMBL" id="AK137836">
    <property type="protein sequence ID" value="BAE23505.1"/>
    <property type="molecule type" value="mRNA"/>
</dbReference>
<dbReference type="EMBL" id="AK150021">
    <property type="protein sequence ID" value="BAE29246.1"/>
    <property type="molecule type" value="mRNA"/>
</dbReference>
<dbReference type="EMBL" id="AK152182">
    <property type="protein sequence ID" value="BAE31013.1"/>
    <property type="molecule type" value="mRNA"/>
</dbReference>
<dbReference type="EMBL" id="AK153313">
    <property type="protein sequence ID" value="BAE31894.1"/>
    <property type="molecule type" value="mRNA"/>
</dbReference>
<dbReference type="EMBL" id="AK153396">
    <property type="protein sequence ID" value="BAE31958.1"/>
    <property type="molecule type" value="mRNA"/>
</dbReference>
<dbReference type="EMBL" id="AK155031">
    <property type="protein sequence ID" value="BAE33003.1"/>
    <property type="molecule type" value="mRNA"/>
</dbReference>
<dbReference type="EMBL" id="AL591404">
    <property type="status" value="NOT_ANNOTATED_CDS"/>
    <property type="molecule type" value="Genomic_DNA"/>
</dbReference>
<dbReference type="EMBL" id="CH466558">
    <property type="protein sequence ID" value="EDL34661.1"/>
    <property type="molecule type" value="Genomic_DNA"/>
</dbReference>
<dbReference type="EMBL" id="CH466558">
    <property type="protein sequence ID" value="EDL34662.1"/>
    <property type="molecule type" value="Genomic_DNA"/>
</dbReference>
<dbReference type="EMBL" id="BC090658">
    <property type="protein sequence ID" value="AAH90658.1"/>
    <property type="molecule type" value="mRNA"/>
</dbReference>
<dbReference type="CCDS" id="CCDS25701.1"/>
<dbReference type="PIR" id="A53202">
    <property type="entry name" value="A53202"/>
</dbReference>
<dbReference type="RefSeq" id="NP_035280.1">
    <property type="nucleotide sequence ID" value="NM_011150.3"/>
</dbReference>
<dbReference type="SMR" id="Q07797"/>
<dbReference type="BioGRID" id="202330">
    <property type="interactions" value="65"/>
</dbReference>
<dbReference type="FunCoup" id="Q07797">
    <property type="interactions" value="458"/>
</dbReference>
<dbReference type="IntAct" id="Q07797">
    <property type="interactions" value="51"/>
</dbReference>
<dbReference type="STRING" id="10090.ENSMUSP00000035579"/>
<dbReference type="GlyConnect" id="2319">
    <property type="glycosylation" value="2 N-Linked glycans (1 site)"/>
</dbReference>
<dbReference type="GlyCosmos" id="Q07797">
    <property type="glycosylation" value="6 sites, 2 glycans"/>
</dbReference>
<dbReference type="GlyGen" id="Q07797">
    <property type="glycosylation" value="7 sites, 4 N-linked glycans (4 sites), 1 O-linked glycan (1 site)"/>
</dbReference>
<dbReference type="iPTMnet" id="Q07797"/>
<dbReference type="PhosphoSitePlus" id="Q07797"/>
<dbReference type="CPTAC" id="non-CPTAC-3924"/>
<dbReference type="jPOST" id="Q07797"/>
<dbReference type="PaxDb" id="10090-ENSMUSP00000035579"/>
<dbReference type="PeptideAtlas" id="Q07797"/>
<dbReference type="ProteomicsDB" id="252467"/>
<dbReference type="Pumba" id="Q07797"/>
<dbReference type="Antibodypedia" id="604">
    <property type="antibodies" value="448 antibodies from 35 providers"/>
</dbReference>
<dbReference type="DNASU" id="19039"/>
<dbReference type="Ensembl" id="ENSMUST00000043722.10">
    <property type="protein sequence ID" value="ENSMUSP00000035579.4"/>
    <property type="gene ID" value="ENSMUSG00000033880.12"/>
</dbReference>
<dbReference type="GeneID" id="19039"/>
<dbReference type="KEGG" id="mmu:19039"/>
<dbReference type="UCSC" id="uc007moz.1">
    <property type="organism name" value="mouse"/>
</dbReference>
<dbReference type="AGR" id="MGI:99554"/>
<dbReference type="CTD" id="3959"/>
<dbReference type="MGI" id="MGI:99554">
    <property type="gene designation" value="Lgals3bp"/>
</dbReference>
<dbReference type="VEuPathDB" id="HostDB:ENSMUSG00000033880"/>
<dbReference type="eggNOG" id="ENOG502QU48">
    <property type="taxonomic scope" value="Eukaryota"/>
</dbReference>
<dbReference type="GeneTree" id="ENSGT00940000162516"/>
<dbReference type="HOGENOM" id="CLU_032646_0_0_1"/>
<dbReference type="InParanoid" id="Q07797"/>
<dbReference type="OMA" id="LMLCGGR"/>
<dbReference type="OrthoDB" id="25028at2759"/>
<dbReference type="PhylomeDB" id="Q07797"/>
<dbReference type="TreeFam" id="TF331368"/>
<dbReference type="Reactome" id="R-MMU-114608">
    <property type="pathway name" value="Platelet degranulation"/>
</dbReference>
<dbReference type="BioGRID-ORCS" id="19039">
    <property type="hits" value="0 hits in 75 CRISPR screens"/>
</dbReference>
<dbReference type="ChiTaRS" id="Lgals3bp">
    <property type="organism name" value="mouse"/>
</dbReference>
<dbReference type="PRO" id="PR:Q07797"/>
<dbReference type="Proteomes" id="UP000000589">
    <property type="component" value="Chromosome 11"/>
</dbReference>
<dbReference type="RNAct" id="Q07797">
    <property type="molecule type" value="protein"/>
</dbReference>
<dbReference type="Bgee" id="ENSMUSG00000033880">
    <property type="expression patterns" value="Expressed in small intestine Peyer's patch and 188 other cell types or tissues"/>
</dbReference>
<dbReference type="ExpressionAtlas" id="Q07797">
    <property type="expression patterns" value="baseline and differential"/>
</dbReference>
<dbReference type="GO" id="GO:0005615">
    <property type="term" value="C:extracellular space"/>
    <property type="evidence" value="ECO:0007005"/>
    <property type="project" value="BHF-UCL"/>
</dbReference>
<dbReference type="GO" id="GO:0016020">
    <property type="term" value="C:membrane"/>
    <property type="evidence" value="ECO:0007669"/>
    <property type="project" value="InterPro"/>
</dbReference>
<dbReference type="GO" id="GO:0005044">
    <property type="term" value="F:scavenger receptor activity"/>
    <property type="evidence" value="ECO:0000250"/>
    <property type="project" value="MGI"/>
</dbReference>
<dbReference type="GO" id="GO:0007155">
    <property type="term" value="P:cell adhesion"/>
    <property type="evidence" value="ECO:0007669"/>
    <property type="project" value="UniProtKB-KW"/>
</dbReference>
<dbReference type="FunFam" id="3.30.710.10:FF:000128">
    <property type="entry name" value="galectin-3-binding protein precursor"/>
    <property type="match status" value="1"/>
</dbReference>
<dbReference type="FunFam" id="3.10.250.10:FF:000005">
    <property type="entry name" value="Neurotrypsin isoform A"/>
    <property type="match status" value="1"/>
</dbReference>
<dbReference type="Gene3D" id="1.25.40.420">
    <property type="match status" value="1"/>
</dbReference>
<dbReference type="Gene3D" id="3.30.710.10">
    <property type="entry name" value="Potassium Channel Kv1.1, Chain A"/>
    <property type="match status" value="1"/>
</dbReference>
<dbReference type="Gene3D" id="3.10.250.10">
    <property type="entry name" value="SRCR-like domain"/>
    <property type="match status" value="1"/>
</dbReference>
<dbReference type="InterPro" id="IPR011705">
    <property type="entry name" value="BACK"/>
</dbReference>
<dbReference type="InterPro" id="IPR051481">
    <property type="entry name" value="BTB-POZ/Galectin-3-binding"/>
</dbReference>
<dbReference type="InterPro" id="IPR000210">
    <property type="entry name" value="BTB/POZ_dom"/>
</dbReference>
<dbReference type="InterPro" id="IPR011333">
    <property type="entry name" value="SKP1/BTB/POZ_sf"/>
</dbReference>
<dbReference type="InterPro" id="IPR001190">
    <property type="entry name" value="SRCR"/>
</dbReference>
<dbReference type="InterPro" id="IPR036772">
    <property type="entry name" value="SRCR-like_dom_sf"/>
</dbReference>
<dbReference type="PANTHER" id="PTHR24410:SF16">
    <property type="entry name" value="GALECTIN-3-BINDING PROTEIN"/>
    <property type="match status" value="1"/>
</dbReference>
<dbReference type="PANTHER" id="PTHR24410">
    <property type="entry name" value="HL07962P-RELATED"/>
    <property type="match status" value="1"/>
</dbReference>
<dbReference type="Pfam" id="PF07707">
    <property type="entry name" value="BACK"/>
    <property type="match status" value="1"/>
</dbReference>
<dbReference type="Pfam" id="PF00530">
    <property type="entry name" value="SRCR"/>
    <property type="match status" value="1"/>
</dbReference>
<dbReference type="PRINTS" id="PR00258">
    <property type="entry name" value="SPERACTRCPTR"/>
</dbReference>
<dbReference type="SMART" id="SM00875">
    <property type="entry name" value="BACK"/>
    <property type="match status" value="1"/>
</dbReference>
<dbReference type="SMART" id="SM00225">
    <property type="entry name" value="BTB"/>
    <property type="match status" value="1"/>
</dbReference>
<dbReference type="SMART" id="SM00202">
    <property type="entry name" value="SR"/>
    <property type="match status" value="1"/>
</dbReference>
<dbReference type="SUPFAM" id="SSF54695">
    <property type="entry name" value="POZ domain"/>
    <property type="match status" value="1"/>
</dbReference>
<dbReference type="SUPFAM" id="SSF56487">
    <property type="entry name" value="SRCR-like"/>
    <property type="match status" value="1"/>
</dbReference>
<dbReference type="PROSITE" id="PS50097">
    <property type="entry name" value="BTB"/>
    <property type="match status" value="1"/>
</dbReference>
<dbReference type="PROSITE" id="PS00420">
    <property type="entry name" value="SRCR_1"/>
    <property type="match status" value="1"/>
</dbReference>
<dbReference type="PROSITE" id="PS50287">
    <property type="entry name" value="SRCR_2"/>
    <property type="match status" value="1"/>
</dbReference>
<accession>Q07797</accession>
<accession>O35649</accession>
<accession>Q3U631</accession>
<accession>Q3U8K4</accession>
<accession>Q3UDL5</accession>